<accession>Q2RU16</accession>
<proteinExistence type="inferred from homology"/>
<sequence length="226" mass="24282">MPQAALRLDKVTRSFSQGREVLNVLTGADLAVNPGEIVALVGPSGAGKSTLLQICGLLEKPTAGEVRIGGISCGQLSEDRRTLLRRDHLGFVYQYHHLLPEFSAAENIVVPQMIAGIGRKPALARAAELLAKMGLSERQDHRPGQLSGGEQQRVAICRALANRPKLLLADEPTGNLDPNTAERVFQALLDLVRGEGLAALIATHNPDLARRMDRIVTLREGKVVAA</sequence>
<protein>
    <recommendedName>
        <fullName evidence="1">Lipoprotein-releasing system ATP-binding protein LolD 1</fullName>
        <ecNumber evidence="1">7.6.2.-</ecNumber>
    </recommendedName>
</protein>
<feature type="chain" id="PRO_0000272142" description="Lipoprotein-releasing system ATP-binding protein LolD 1">
    <location>
        <begin position="1"/>
        <end position="226"/>
    </location>
</feature>
<feature type="domain" description="ABC transporter" evidence="1">
    <location>
        <begin position="6"/>
        <end position="226"/>
    </location>
</feature>
<feature type="binding site" evidence="1">
    <location>
        <begin position="42"/>
        <end position="49"/>
    </location>
    <ligand>
        <name>ATP</name>
        <dbReference type="ChEBI" id="CHEBI:30616"/>
    </ligand>
</feature>
<organism>
    <name type="scientific">Rhodospirillum rubrum (strain ATCC 11170 / ATH 1.1.1 / DSM 467 / LMG 4362 / NCIMB 8255 / S1)</name>
    <dbReference type="NCBI Taxonomy" id="269796"/>
    <lineage>
        <taxon>Bacteria</taxon>
        <taxon>Pseudomonadati</taxon>
        <taxon>Pseudomonadota</taxon>
        <taxon>Alphaproteobacteria</taxon>
        <taxon>Rhodospirillales</taxon>
        <taxon>Rhodospirillaceae</taxon>
        <taxon>Rhodospirillum</taxon>
    </lineage>
</organism>
<reference key="1">
    <citation type="journal article" date="2011" name="Stand. Genomic Sci.">
        <title>Complete genome sequence of Rhodospirillum rubrum type strain (S1).</title>
        <authorList>
            <person name="Munk A.C."/>
            <person name="Copeland A."/>
            <person name="Lucas S."/>
            <person name="Lapidus A."/>
            <person name="Del Rio T.G."/>
            <person name="Barry K."/>
            <person name="Detter J.C."/>
            <person name="Hammon N."/>
            <person name="Israni S."/>
            <person name="Pitluck S."/>
            <person name="Brettin T."/>
            <person name="Bruce D."/>
            <person name="Han C."/>
            <person name="Tapia R."/>
            <person name="Gilna P."/>
            <person name="Schmutz J."/>
            <person name="Larimer F."/>
            <person name="Land M."/>
            <person name="Kyrpides N.C."/>
            <person name="Mavromatis K."/>
            <person name="Richardson P."/>
            <person name="Rohde M."/>
            <person name="Goeker M."/>
            <person name="Klenk H.P."/>
            <person name="Zhang Y."/>
            <person name="Roberts G.P."/>
            <person name="Reslewic S."/>
            <person name="Schwartz D.C."/>
        </authorList>
    </citation>
    <scope>NUCLEOTIDE SEQUENCE [LARGE SCALE GENOMIC DNA]</scope>
    <source>
        <strain>ATCC 11170 / ATH 1.1.1 / DSM 467 / LMG 4362 / NCIMB 8255 / S1</strain>
    </source>
</reference>
<dbReference type="EC" id="7.6.2.-" evidence="1"/>
<dbReference type="EMBL" id="CP000230">
    <property type="protein sequence ID" value="ABC22379.1"/>
    <property type="status" value="ALT_INIT"/>
    <property type="molecule type" value="Genomic_DNA"/>
</dbReference>
<dbReference type="RefSeq" id="YP_426666.1">
    <property type="nucleotide sequence ID" value="NC_007643.1"/>
</dbReference>
<dbReference type="SMR" id="Q2RU16"/>
<dbReference type="STRING" id="269796.Rru_A1579"/>
<dbReference type="EnsemblBacteria" id="ABC22379">
    <property type="protein sequence ID" value="ABC22379"/>
    <property type="gene ID" value="Rru_A1579"/>
</dbReference>
<dbReference type="KEGG" id="rru:Rru_A1579"/>
<dbReference type="PATRIC" id="fig|269796.9.peg.1652"/>
<dbReference type="eggNOG" id="COG1136">
    <property type="taxonomic scope" value="Bacteria"/>
</dbReference>
<dbReference type="HOGENOM" id="CLU_000604_1_22_5"/>
<dbReference type="PhylomeDB" id="Q2RU16"/>
<dbReference type="Proteomes" id="UP000001929">
    <property type="component" value="Chromosome"/>
</dbReference>
<dbReference type="GO" id="GO:0005886">
    <property type="term" value="C:plasma membrane"/>
    <property type="evidence" value="ECO:0007669"/>
    <property type="project" value="UniProtKB-SubCell"/>
</dbReference>
<dbReference type="GO" id="GO:0005524">
    <property type="term" value="F:ATP binding"/>
    <property type="evidence" value="ECO:0007669"/>
    <property type="project" value="UniProtKB-KW"/>
</dbReference>
<dbReference type="GO" id="GO:0016887">
    <property type="term" value="F:ATP hydrolysis activity"/>
    <property type="evidence" value="ECO:0007669"/>
    <property type="project" value="InterPro"/>
</dbReference>
<dbReference type="GO" id="GO:0022857">
    <property type="term" value="F:transmembrane transporter activity"/>
    <property type="evidence" value="ECO:0007669"/>
    <property type="project" value="TreeGrafter"/>
</dbReference>
<dbReference type="GO" id="GO:0044874">
    <property type="term" value="P:lipoprotein localization to outer membrane"/>
    <property type="evidence" value="ECO:0007669"/>
    <property type="project" value="TreeGrafter"/>
</dbReference>
<dbReference type="GO" id="GO:0089705">
    <property type="term" value="P:protein localization to outer membrane"/>
    <property type="evidence" value="ECO:0007669"/>
    <property type="project" value="TreeGrafter"/>
</dbReference>
<dbReference type="CDD" id="cd03255">
    <property type="entry name" value="ABC_MJ0796_LolCDE_FtsE"/>
    <property type="match status" value="1"/>
</dbReference>
<dbReference type="FunFam" id="3.40.50.300:FF:000032">
    <property type="entry name" value="Export ABC transporter ATP-binding protein"/>
    <property type="match status" value="1"/>
</dbReference>
<dbReference type="Gene3D" id="3.40.50.300">
    <property type="entry name" value="P-loop containing nucleotide triphosphate hydrolases"/>
    <property type="match status" value="1"/>
</dbReference>
<dbReference type="InterPro" id="IPR003593">
    <property type="entry name" value="AAA+_ATPase"/>
</dbReference>
<dbReference type="InterPro" id="IPR003439">
    <property type="entry name" value="ABC_transporter-like_ATP-bd"/>
</dbReference>
<dbReference type="InterPro" id="IPR017871">
    <property type="entry name" value="ABC_transporter-like_CS"/>
</dbReference>
<dbReference type="InterPro" id="IPR015854">
    <property type="entry name" value="ABC_transpr_LolD-like"/>
</dbReference>
<dbReference type="InterPro" id="IPR017911">
    <property type="entry name" value="MacB-like_ATP-bd"/>
</dbReference>
<dbReference type="InterPro" id="IPR027417">
    <property type="entry name" value="P-loop_NTPase"/>
</dbReference>
<dbReference type="PANTHER" id="PTHR24220">
    <property type="entry name" value="IMPORT ATP-BINDING PROTEIN"/>
    <property type="match status" value="1"/>
</dbReference>
<dbReference type="PANTHER" id="PTHR24220:SF689">
    <property type="entry name" value="LIPOPROTEIN-RELEASING SYSTEM ATP-BINDING PROTEIN LOLD"/>
    <property type="match status" value="1"/>
</dbReference>
<dbReference type="Pfam" id="PF00005">
    <property type="entry name" value="ABC_tran"/>
    <property type="match status" value="1"/>
</dbReference>
<dbReference type="SMART" id="SM00382">
    <property type="entry name" value="AAA"/>
    <property type="match status" value="1"/>
</dbReference>
<dbReference type="SUPFAM" id="SSF52540">
    <property type="entry name" value="P-loop containing nucleoside triphosphate hydrolases"/>
    <property type="match status" value="1"/>
</dbReference>
<dbReference type="PROSITE" id="PS00211">
    <property type="entry name" value="ABC_TRANSPORTER_1"/>
    <property type="match status" value="1"/>
</dbReference>
<dbReference type="PROSITE" id="PS50893">
    <property type="entry name" value="ABC_TRANSPORTER_2"/>
    <property type="match status" value="1"/>
</dbReference>
<dbReference type="PROSITE" id="PS51244">
    <property type="entry name" value="LOLD"/>
    <property type="match status" value="1"/>
</dbReference>
<name>LOLD1_RHORT</name>
<comment type="function">
    <text evidence="1">Part of the ABC transporter complex LolCDE involved in the translocation of mature outer membrane-directed lipoproteins, from the inner membrane to the periplasmic chaperone, LolA. Responsible for the formation of the LolA-lipoprotein complex in an ATP-dependent manner.</text>
</comment>
<comment type="subunit">
    <text evidence="1">The complex is composed of two ATP-binding proteins (LolD) and two transmembrane proteins (LolC and LolE).</text>
</comment>
<comment type="subcellular location">
    <subcellularLocation>
        <location evidence="1">Cell inner membrane</location>
        <topology evidence="1">Peripheral membrane protein</topology>
    </subcellularLocation>
</comment>
<comment type="similarity">
    <text evidence="1">Belongs to the ABC transporter superfamily. Lipoprotein translocase (TC 3.A.1.125) family.</text>
</comment>
<comment type="sequence caution" evidence="2">
    <conflict type="erroneous initiation">
        <sequence resource="EMBL-CDS" id="ABC22379"/>
    </conflict>
</comment>
<gene>
    <name evidence="1" type="primary">lolD1</name>
    <name type="ordered locus">Rru_A1579</name>
</gene>
<evidence type="ECO:0000255" key="1">
    <source>
        <dbReference type="HAMAP-Rule" id="MF_01708"/>
    </source>
</evidence>
<evidence type="ECO:0000305" key="2"/>
<keyword id="KW-0067">ATP-binding</keyword>
<keyword id="KW-0997">Cell inner membrane</keyword>
<keyword id="KW-1003">Cell membrane</keyword>
<keyword id="KW-0472">Membrane</keyword>
<keyword id="KW-0547">Nucleotide-binding</keyword>
<keyword id="KW-1185">Reference proteome</keyword>
<keyword id="KW-1278">Translocase</keyword>
<keyword id="KW-0813">Transport</keyword>